<comment type="function">
    <text evidence="1">May contribute to neddylation of cullin components of SCF-type E3 ubiquitin ligase complexes. Neddylation of cullins play an essential role in the regulation of SCF-type complexes activity (By similarity).</text>
</comment>
<dbReference type="EMBL" id="CM003141">
    <property type="protein sequence ID" value="KIS71346.1"/>
    <property type="molecule type" value="Genomic_DNA"/>
</dbReference>
<dbReference type="RefSeq" id="XP_011387180.1">
    <property type="nucleotide sequence ID" value="XM_011388878.1"/>
</dbReference>
<dbReference type="SMR" id="Q4PF67"/>
<dbReference type="FunCoup" id="Q4PF67">
    <property type="interactions" value="150"/>
</dbReference>
<dbReference type="STRING" id="237631.Q4PF67"/>
<dbReference type="EnsemblFungi" id="KIS71346">
    <property type="protein sequence ID" value="KIS71346"/>
    <property type="gene ID" value="UMAG_01246"/>
</dbReference>
<dbReference type="GeneID" id="23562336"/>
<dbReference type="KEGG" id="uma:UMAG_01246"/>
<dbReference type="VEuPathDB" id="FungiDB:UMAG_01246"/>
<dbReference type="eggNOG" id="KOG3077">
    <property type="taxonomic scope" value="Eukaryota"/>
</dbReference>
<dbReference type="HOGENOM" id="CLU_047042_0_0_1"/>
<dbReference type="InParanoid" id="Q4PF67"/>
<dbReference type="OMA" id="LWCKFLQ"/>
<dbReference type="OrthoDB" id="27198at2759"/>
<dbReference type="Proteomes" id="UP000000561">
    <property type="component" value="Chromosome 2"/>
</dbReference>
<dbReference type="GO" id="GO:0000151">
    <property type="term" value="C:ubiquitin ligase complex"/>
    <property type="evidence" value="ECO:0000318"/>
    <property type="project" value="GO_Central"/>
</dbReference>
<dbReference type="GO" id="GO:0097602">
    <property type="term" value="F:cullin family protein binding"/>
    <property type="evidence" value="ECO:0000318"/>
    <property type="project" value="GO_Central"/>
</dbReference>
<dbReference type="GO" id="GO:0031624">
    <property type="term" value="F:ubiquitin conjugating enzyme binding"/>
    <property type="evidence" value="ECO:0000318"/>
    <property type="project" value="GO_Central"/>
</dbReference>
<dbReference type="GO" id="GO:0032182">
    <property type="term" value="F:ubiquitin-like protein binding"/>
    <property type="evidence" value="ECO:0000318"/>
    <property type="project" value="GO_Central"/>
</dbReference>
<dbReference type="GO" id="GO:0045116">
    <property type="term" value="P:protein neddylation"/>
    <property type="evidence" value="ECO:0000318"/>
    <property type="project" value="GO_Central"/>
</dbReference>
<dbReference type="FunFam" id="1.10.238.200:FF:000008">
    <property type="entry name" value="Defective in cullin neddylation protein"/>
    <property type="match status" value="1"/>
</dbReference>
<dbReference type="Gene3D" id="1.10.238.200">
    <property type="entry name" value="Cullin, PONY binding domain"/>
    <property type="match status" value="1"/>
</dbReference>
<dbReference type="Gene3D" id="1.10.8.10">
    <property type="entry name" value="DNA helicase RuvA subunit, C-terminal domain"/>
    <property type="match status" value="1"/>
</dbReference>
<dbReference type="Gene3D" id="1.10.238.10">
    <property type="entry name" value="EF-hand"/>
    <property type="match status" value="1"/>
</dbReference>
<dbReference type="InterPro" id="IPR014764">
    <property type="entry name" value="DCN-prot"/>
</dbReference>
<dbReference type="InterPro" id="IPR042460">
    <property type="entry name" value="DCN1-like_PONY"/>
</dbReference>
<dbReference type="InterPro" id="IPR005176">
    <property type="entry name" value="PONY_dom"/>
</dbReference>
<dbReference type="InterPro" id="IPR009060">
    <property type="entry name" value="UBA-like_sf"/>
</dbReference>
<dbReference type="PANTHER" id="PTHR12281:SF31">
    <property type="entry name" value="DCN1-LIKE PROTEIN 3"/>
    <property type="match status" value="1"/>
</dbReference>
<dbReference type="PANTHER" id="PTHR12281">
    <property type="entry name" value="RP42 RELATED"/>
    <property type="match status" value="1"/>
</dbReference>
<dbReference type="Pfam" id="PF03556">
    <property type="entry name" value="Cullin_binding"/>
    <property type="match status" value="1"/>
</dbReference>
<dbReference type="Pfam" id="PF14555">
    <property type="entry name" value="UBA_4"/>
    <property type="match status" value="1"/>
</dbReference>
<dbReference type="SUPFAM" id="SSF46934">
    <property type="entry name" value="UBA-like"/>
    <property type="match status" value="1"/>
</dbReference>
<dbReference type="PROSITE" id="PS51229">
    <property type="entry name" value="DCUN1"/>
    <property type="match status" value="1"/>
</dbReference>
<organism>
    <name type="scientific">Mycosarcoma maydis</name>
    <name type="common">Corn smut fungus</name>
    <name type="synonym">Ustilago maydis</name>
    <dbReference type="NCBI Taxonomy" id="5270"/>
    <lineage>
        <taxon>Eukaryota</taxon>
        <taxon>Fungi</taxon>
        <taxon>Dikarya</taxon>
        <taxon>Basidiomycota</taxon>
        <taxon>Ustilaginomycotina</taxon>
        <taxon>Ustilaginomycetes</taxon>
        <taxon>Ustilaginales</taxon>
        <taxon>Ustilaginaceae</taxon>
        <taxon>Mycosarcoma</taxon>
    </lineage>
</organism>
<sequence length="319" mass="36204">MSSAAKKEAILRQFRQLTNATPQDANRILKAHGYRIEPATDAFFNNEQAQINASISSSTLDRKSEREVKERLNALFDRFRDAGADSDEEDDEASQPEDRDLISIGGALKMCEALEVSPEDVVFLPLSYYLKSASMGTFTREGYINGWKMLDLSDTIDKQKKTLEKLRQELLDNKPLRLERIAQEKSNPATASGANKGLYEKVYEYTYAFARREGQKSLALENALAFWDLVLPASPTFQRAGSQGTFTQAQLDLWKRFLSEQTRGRAVSKDTWMQFLDFTKEINSDFSNHDFDAAWPSIIDDFVLWVRDNMPASDGMDTS</sequence>
<protein>
    <recommendedName>
        <fullName>Defective in cullin neddylation protein 1</fullName>
    </recommendedName>
</protein>
<feature type="chain" id="PRO_0000129516" description="Defective in cullin neddylation protein 1">
    <location>
        <begin position="1"/>
        <end position="319"/>
    </location>
</feature>
<feature type="domain" description="UBA-like">
    <location>
        <begin position="7"/>
        <end position="44"/>
    </location>
</feature>
<feature type="domain" description="DCUN1" evidence="2">
    <location>
        <begin position="67"/>
        <end position="307"/>
    </location>
</feature>
<reference key="1">
    <citation type="journal article" date="2006" name="Nature">
        <title>Insights from the genome of the biotrophic fungal plant pathogen Ustilago maydis.</title>
        <authorList>
            <person name="Kaemper J."/>
            <person name="Kahmann R."/>
            <person name="Boelker M."/>
            <person name="Ma L.-J."/>
            <person name="Brefort T."/>
            <person name="Saville B.J."/>
            <person name="Banuett F."/>
            <person name="Kronstad J.W."/>
            <person name="Gold S.E."/>
            <person name="Mueller O."/>
            <person name="Perlin M.H."/>
            <person name="Woesten H.A.B."/>
            <person name="de Vries R."/>
            <person name="Ruiz-Herrera J."/>
            <person name="Reynaga-Pena C.G."/>
            <person name="Snetselaar K."/>
            <person name="McCann M."/>
            <person name="Perez-Martin J."/>
            <person name="Feldbruegge M."/>
            <person name="Basse C.W."/>
            <person name="Steinberg G."/>
            <person name="Ibeas J.I."/>
            <person name="Holloman W."/>
            <person name="Guzman P."/>
            <person name="Farman M.L."/>
            <person name="Stajich J.E."/>
            <person name="Sentandreu R."/>
            <person name="Gonzalez-Prieto J.M."/>
            <person name="Kennell J.C."/>
            <person name="Molina L."/>
            <person name="Schirawski J."/>
            <person name="Mendoza-Mendoza A."/>
            <person name="Greilinger D."/>
            <person name="Muench K."/>
            <person name="Roessel N."/>
            <person name="Scherer M."/>
            <person name="Vranes M."/>
            <person name="Ladendorf O."/>
            <person name="Vincon V."/>
            <person name="Fuchs U."/>
            <person name="Sandrock B."/>
            <person name="Meng S."/>
            <person name="Ho E.C.H."/>
            <person name="Cahill M.J."/>
            <person name="Boyce K.J."/>
            <person name="Klose J."/>
            <person name="Klosterman S.J."/>
            <person name="Deelstra H.J."/>
            <person name="Ortiz-Castellanos L."/>
            <person name="Li W."/>
            <person name="Sanchez-Alonso P."/>
            <person name="Schreier P.H."/>
            <person name="Haeuser-Hahn I."/>
            <person name="Vaupel M."/>
            <person name="Koopmann E."/>
            <person name="Friedrich G."/>
            <person name="Voss H."/>
            <person name="Schlueter T."/>
            <person name="Margolis J."/>
            <person name="Platt D."/>
            <person name="Swimmer C."/>
            <person name="Gnirke A."/>
            <person name="Chen F."/>
            <person name="Vysotskaia V."/>
            <person name="Mannhaupt G."/>
            <person name="Gueldener U."/>
            <person name="Muensterkoetter M."/>
            <person name="Haase D."/>
            <person name="Oesterheld M."/>
            <person name="Mewes H.-W."/>
            <person name="Mauceli E.W."/>
            <person name="DeCaprio D."/>
            <person name="Wade C.M."/>
            <person name="Butler J."/>
            <person name="Young S.K."/>
            <person name="Jaffe D.B."/>
            <person name="Calvo S.E."/>
            <person name="Nusbaum C."/>
            <person name="Galagan J.E."/>
            <person name="Birren B.W."/>
        </authorList>
    </citation>
    <scope>NUCLEOTIDE SEQUENCE [LARGE SCALE GENOMIC DNA]</scope>
    <source>
        <strain>DSM 14603 / FGSC 9021 / UM521</strain>
    </source>
</reference>
<reference key="2">
    <citation type="submission" date="2014-09" db="EMBL/GenBank/DDBJ databases">
        <authorList>
            <person name="Gueldener U."/>
            <person name="Muensterkoetter M."/>
            <person name="Walter M.C."/>
            <person name="Mannhaupt G."/>
            <person name="Kahmann R."/>
        </authorList>
    </citation>
    <scope>GENOME REANNOTATION</scope>
    <source>
        <strain>DSM 14603 / FGSC 9021 / UM521</strain>
    </source>
</reference>
<name>DCN1_MYCMD</name>
<accession>Q4PF67</accession>
<accession>A0A0D1E6Z0</accession>
<gene>
    <name type="primary">DCN1</name>
    <name type="ORF">UMAG_01246</name>
</gene>
<evidence type="ECO:0000250" key="1"/>
<evidence type="ECO:0000255" key="2">
    <source>
        <dbReference type="PROSITE-ProRule" id="PRU00574"/>
    </source>
</evidence>
<proteinExistence type="inferred from homology"/>
<keyword id="KW-1185">Reference proteome</keyword>
<keyword id="KW-0833">Ubl conjugation pathway</keyword>